<organism>
    <name type="scientific">Human cytomegalovirus (strain AD169)</name>
    <name type="common">HHV-5</name>
    <name type="synonym">Human herpesvirus 5</name>
    <dbReference type="NCBI Taxonomy" id="10360"/>
    <lineage>
        <taxon>Viruses</taxon>
        <taxon>Duplodnaviria</taxon>
        <taxon>Heunggongvirae</taxon>
        <taxon>Peploviricota</taxon>
        <taxon>Herviviricetes</taxon>
        <taxon>Herpesvirales</taxon>
        <taxon>Orthoherpesviridae</taxon>
        <taxon>Betaherpesvirinae</taxon>
        <taxon>Cytomegalovirus</taxon>
        <taxon>Cytomegalovirus humanbeta5</taxon>
        <taxon>Human cytomegalovirus</taxon>
    </lineage>
</organism>
<accession>P16778</accession>
<accession>P87887</accession>
<accession>Q7M6P6</accession>
<proteinExistence type="evidence at protein level"/>
<protein>
    <recommendedName>
        <fullName>UL37 immediate early glycoprotein</fullName>
    </recommendedName>
</protein>
<keyword id="KW-0002">3D-structure</keyword>
<keyword id="KW-0025">Alternative splicing</keyword>
<keyword id="KW-0325">Glycoprotein</keyword>
<keyword id="KW-1038">Host endoplasmic reticulum</keyword>
<keyword id="KW-1040">Host Golgi apparatus</keyword>
<keyword id="KW-1043">Host membrane</keyword>
<keyword id="KW-1045">Host mitochondrion</keyword>
<keyword id="KW-0945">Host-virus interaction</keyword>
<keyword id="KW-0472">Membrane</keyword>
<keyword id="KW-1119">Modulation of host cell apoptosis by virus</keyword>
<keyword id="KW-1185">Reference proteome</keyword>
<keyword id="KW-0732">Signal</keyword>
<keyword id="KW-0812">Transmembrane</keyword>
<keyword id="KW-1133">Transmembrane helix</keyword>
<comment type="function">
    <molecule>Isoform vMIA</molecule>
    <text evidence="3 4 8 9 10 11 12">Multifunctional transmembrane protein that plays several key roles in viral replication. Rapidely traffics from the host endoplasmic reticulum to the outer mitochondrial membrane where it acts to inhibit host immune response, block apoptotic signaling, regulate calcium flux, and induce mitochondrial fragmentation. Sequesters proapoptotic BAX at the outer mitochondrial membrane and prevents cytochrome c release and subsequent initiation of the proapoptotic cascade (PubMed:15004026, PubMed:15148411). Also provoques a calcium efflux from host endoplasmic reticulum and F-actin cytoskeleton disruption. Participates in the increase of host mitochondrial biogenesis, thus promoting viral replication by efficient use of newly made mitochondria (PubMed:21907833). Additionally, a subset of vMIA localizes to peroxisomes, causing fragmentation and blocking peroxisomal MAVS signaling (PubMed:27181750, PubMed:32726614). Mechanistically, inhibits host MAVS oligomerization at peroxisomes in a mitochondrial fission factors (MFF)-dependent manner and in mitochondria independently of mitochondrial fission factors (PubMed:32726614). Plays an essential role in the trafficking of host viperin/RSAD2 from the endoplasmic reticulum to the viral assembly compartment via the mitochondria during viral infection as failure of viperin to localize to the mitochondria results in insufficient lipogenesis and thus reduces viral replication (PubMed:37306568).</text>
</comment>
<comment type="function">
    <molecule>Isoform gpUL37</molecule>
    <text>May play a role in escape from the host antiviral response.</text>
</comment>
<comment type="subunit">
    <molecule>Isoform vMIA</molecule>
    <text evidence="3 7 9 10">Interacts with host BAX (PubMed:15004026). Interacts with host RSAD2/viperin; this interaction results in RSAD2/viperin relocalization from the endoplasmic reticulum to the mitochondria, actin cytoskeleton disruption and enhancement of infection (PubMed:21527675, PubMed:32726614). Interacts with host PEX19; this interaction inhibits the peroxisomal-dependent antiviral signaling (PubMed:27181750). Interacts with host CHCHD6; this interaction rewires mitochondria by engaging the conserved MICOS complex (PubMed:32726614).</text>
</comment>
<comment type="interaction">
    <interactant intactId="EBI-16026491">
        <id>P16778</id>
    </interactant>
    <interactant intactId="EBI-516580">
        <id>Q07812</id>
        <label>BAX</label>
    </interactant>
    <organismsDiffer>true</organismsDiffer>
    <experiments>2</experiments>
</comment>
<comment type="subcellular location">
    <molecule>Isoform gpUL37</molecule>
    <subcellularLocation>
        <location evidence="13">Host endoplasmic reticulum membrane</location>
        <topology evidence="1">Single-pass membrane protein</topology>
    </subcellularLocation>
    <subcellularLocation>
        <location evidence="13">Host Golgi apparatus membrane</location>
        <topology evidence="1">Single-pass membrane protein</topology>
    </subcellularLocation>
    <subcellularLocation>
        <location evidence="6">Host mitochondrion membrane</location>
        <topology evidence="1">Single-pass membrane protein</topology>
    </subcellularLocation>
    <text>The C-terminal fragment localizes to the endoplasmic reticulum while the N-terminal fragment is stable and traffics to mitochondria.</text>
</comment>
<comment type="subcellular location">
    <molecule>Isoform vMIA</molecule>
    <subcellularLocation>
        <location evidence="5">Host mitochondrion membrane</location>
        <topology evidence="1">Single-pass membrane protein</topology>
    </subcellularLocation>
    <subcellularLocation>
        <location evidence="5">Host endoplasmic reticulum membrane</location>
        <topology evidence="1">Single-pass membrane protein</topology>
    </subcellularLocation>
    <subcellularLocation>
        <location evidence="9 10">Host peroxisome</location>
    </subcellularLocation>
    <text evidence="5">Transported from the endoplasmic reticulum (ER) through the mitochondrial associated membrane (MAMs) to the mitochondrial outer membrane. Associates with internal lipid rafts (LRs) in the MAM.</text>
</comment>
<comment type="subcellular location">
    <molecule>Isoform pUL37m</molecule>
    <subcellularLocation>
        <location evidence="5">Host mitochondrion membrane</location>
        <topology evidence="1">Single-pass membrane protein</topology>
    </subcellularLocation>
    <subcellularLocation>
        <location evidence="5">Host endoplasmic reticulum membrane</location>
        <topology evidence="1">Single-pass membrane protein</topology>
    </subcellularLocation>
    <text evidence="5">Not cleaved or N-glycosylated.</text>
</comment>
<comment type="alternative products">
    <event type="alternative splicing"/>
    <isoform>
        <id>P16778-1</id>
        <name>gpUL37</name>
        <sequence type="displayed"/>
    </isoform>
    <isoform>
        <id>P16778-2</id>
        <name>vMIA</name>
        <sequence type="described" ref="VSP_044014 VSP_044015"/>
    </isoform>
    <isoform>
        <id>P16778-3</id>
        <name>pUL37m</name>
        <sequence type="described" ref="VSP_044016"/>
    </isoform>
</comment>
<comment type="similarity">
    <text evidence="14">Belongs to the immediate early glycoprotein family.</text>
</comment>
<name>VGLI_HCMVA</name>
<reference key="1">
    <citation type="journal article" date="1988" name="Virology">
        <title>An immediate early gene of human cytomegalovirus encodes a potential membrane glycoprotein.</title>
        <authorList>
            <person name="Kouzarides T."/>
            <person name="Bankier A.T."/>
            <person name="Satchwell S.C."/>
            <person name="Preddy E."/>
            <person name="Barrell B.G."/>
        </authorList>
    </citation>
    <scope>NUCLEOTIDE SEQUENCE [GENOMIC DNA]</scope>
</reference>
<reference key="2">
    <citation type="journal article" date="1990" name="Curr. Top. Microbiol. Immunol.">
        <title>Analysis of the protein-coding content of the sequence of human cytomegalovirus strain AD169.</title>
        <authorList>
            <person name="Chee M.S."/>
            <person name="Bankier A.T."/>
            <person name="Beck S."/>
            <person name="Bohni R."/>
            <person name="Brown C.M."/>
            <person name="Cerny R."/>
            <person name="Horsnell T."/>
            <person name="Hutchison C.A. III"/>
            <person name="Kouzarides T."/>
            <person name="Martignetti J.A."/>
            <person name="Preddie E."/>
            <person name="Satchwell S.C."/>
            <person name="Tomlinson P."/>
            <person name="Weston K.M."/>
            <person name="Barrell B.G."/>
        </authorList>
    </citation>
    <scope>NUCLEOTIDE SEQUENCE [LARGE SCALE GENOMIC DNA]</scope>
    <scope>ISOFORM PUL37M</scope>
    <scope>ISOFORM VMIA</scope>
</reference>
<reference key="3">
    <citation type="journal article" date="2003" name="J. Gen. Virol.">
        <title>The human cytomegalovirus genome revisited: comparison with the chimpanzee cytomegalovirus genome.</title>
        <authorList>
            <person name="Davison A.J."/>
            <person name="Dolan A."/>
            <person name="Akter P."/>
            <person name="Addison C."/>
            <person name="Dargan D.J."/>
            <person name="Alcendor D.J."/>
            <person name="McGeoch D.J."/>
            <person name="Hayward G.S."/>
        </authorList>
    </citation>
    <scope>GENOME REANNOTATION</scope>
</reference>
<reference key="4">
    <citation type="journal article" date="2003" name="J. Gen. Virol.">
        <authorList>
            <person name="Davison A.J."/>
            <person name="Dolan A."/>
            <person name="Akter P."/>
            <person name="Addison C."/>
            <person name="Dargan D.J."/>
            <person name="Alcendor D.J."/>
            <person name="McGeoch D.J."/>
            <person name="Hayward G.S."/>
        </authorList>
    </citation>
    <scope>ERRATUM OF PUBMED:12533697</scope>
</reference>
<reference key="5">
    <citation type="journal article" date="1996" name="J. Virol.">
        <title>The human cytomegalovirus UL37 immediate-early regulatory protein is an integral membrane N-glycoprotein which traffics through the endoplasmic reticulum and Golgi apparatus.</title>
        <authorList>
            <person name="Al-Barazi H.O."/>
            <person name="Colberg-Poley A.M."/>
        </authorList>
    </citation>
    <scope>SUBCELLULAR LOCATION</scope>
</reference>
<reference key="6">
    <citation type="journal article" date="2004" name="J. Biol. Chem.">
        <title>An anti-apoptotic viral protein that recruits Bax to mitochondria.</title>
        <authorList>
            <person name="Poncet D."/>
            <person name="Larochette N."/>
            <person name="Pauleau A.L."/>
            <person name="Boya P."/>
            <person name="Jalil A.A."/>
            <person name="Cartron P.F."/>
            <person name="Vallette F."/>
            <person name="Schnebelen C."/>
            <person name="Bartle L.M."/>
            <person name="Skaletskaya A."/>
            <person name="Boutolleau D."/>
            <person name="Martinou J.C."/>
            <person name="Goldmacher V.S."/>
            <person name="Kroemer G."/>
            <person name="Zamzami N."/>
        </authorList>
    </citation>
    <scope>FUNCTION (ISOFORM VMIA)</scope>
    <scope>INTERACTION WITH HOST BAX</scope>
</reference>
<reference key="7">
    <citation type="journal article" date="2004" name="Proc. Natl. Acad. Sci. U.S.A.">
        <title>Cytomegalovirus cell death suppressor vMIA blocks Bax- but not Bak-mediated apoptosis by binding and sequestering Bax at mitochondria.</title>
        <authorList>
            <person name="Arnoult D."/>
            <person name="Bartle L.M."/>
            <person name="Skaletskaya A."/>
            <person name="Poncet D."/>
            <person name="Zamzami N."/>
            <person name="Park P.U."/>
            <person name="Sharpe J."/>
            <person name="Youle R.J."/>
            <person name="Goldmacher V.S."/>
        </authorList>
    </citation>
    <scope>FUNCTION (ISOFORM VMIA)</scope>
</reference>
<reference key="8">
    <citation type="journal article" date="2004" name="J. Gen. Virol.">
        <title>Internal cleavage of the human cytomegalovirus UL37 immediate-early glycoprotein and divergent trafficking of its proteolytic fragments.</title>
        <authorList>
            <person name="Mavinakere M.S."/>
            <person name="Colberg-Poley A.M."/>
        </authorList>
    </citation>
    <scope>CLEAVAGE SITE</scope>
    <scope>SUBCELLULAR LOCATION</scope>
</reference>
<reference key="9">
    <citation type="journal article" date="2010" name="J. Virol.">
        <title>Trafficking of UL37 proteins into mitochondrion-associated membranes during permissive human cytomegalovirus infection.</title>
        <authorList>
            <person name="Bozidis P."/>
            <person name="Williamson C.D."/>
            <person name="Wong D.S."/>
            <person name="Colberg-Poley A.M."/>
        </authorList>
    </citation>
    <scope>SUBCELLULAR LOCATION</scope>
</reference>
<reference key="10">
    <citation type="journal article" date="2011" name="Science">
        <title>Human cytomegalovirus directly induces the antiviral protein viperin to enhance infectivity.</title>
        <authorList>
            <person name="Seo J.Y."/>
            <person name="Yaneva R."/>
            <person name="Hinson E.R."/>
            <person name="Cresswell P."/>
        </authorList>
    </citation>
    <scope>INTERACTION WITH HOST RSAD2 (ISOFORM VMIA)</scope>
</reference>
<reference key="11">
    <citation type="journal article" date="2011" name="Mitochondrion">
        <title>Human cytomegalovirus infection increases mitochondrial biogenesis.</title>
        <authorList>
            <person name="Kaarbo M."/>
            <person name="Ager-Wick E."/>
            <person name="Osenbroch P.O."/>
            <person name="Kilander A."/>
            <person name="Skinnes R."/>
            <person name="Muller F."/>
            <person name="Eide L."/>
        </authorList>
    </citation>
    <scope>FUNCTION (ISOFORM VMIA)</scope>
</reference>
<reference key="12">
    <citation type="journal article" date="2016" name="Sci. Rep.">
        <title>Peroxisomes are platforms for cytomegalovirus' evasion from the cellular immune response.</title>
        <authorList>
            <person name="Magalhaes A.C."/>
            <person name="Ferreira A.R."/>
            <person name="Gomes S."/>
            <person name="Vieira M."/>
            <person name="Gouveia A."/>
            <person name="Valenca I."/>
            <person name="Islinger M."/>
            <person name="Nascimento R."/>
            <person name="Schrader M."/>
            <person name="Kagan J.C."/>
            <person name="Ribeiro D."/>
        </authorList>
    </citation>
    <scope>FUNCTION (ISOFORM VMIA)</scope>
    <scope>SUBCELLULAR LOCATION (ISOFORM VMIA)</scope>
    <scope>INTERACTION WITH HOST PEX19 (ISOFORM VMIA)</scope>
</reference>
<reference key="13">
    <citation type="journal article" date="2020" name="Cell Rep.">
        <title>Mitochondria and Peroxisome Remodeling across Cytomegalovirus Infection Time Viewed through the Lens of Inter-ViSTA.</title>
        <authorList>
            <person name="Federspiel J.D."/>
            <person name="Cook K.C."/>
            <person name="Kennedy M.A."/>
            <person name="Venkatesh S.S."/>
            <person name="Otter C.J."/>
            <person name="Hofstadter W.A."/>
            <person name="Jean Beltran P.M."/>
            <person name="Cristea I.M."/>
        </authorList>
    </citation>
    <scope>FUNCTION (ISOFORM VMIA)</scope>
    <scope>SUBCELLULAR LOCATION (ISOFORM VMIA)</scope>
    <scope>INTERACTION WITH HOST CHCHD6 (ISOFORM VMIA)</scope>
</reference>
<reference key="14">
    <citation type="journal article" date="2022" name="Front. Cell Dev. Biol.">
        <title>Human Cytomegalovirus vMIA Inhibits MAVS Oligomerization at Peroxisomes in an MFF-Dependent Manner.</title>
        <authorList>
            <person name="Ferreira A.R."/>
            <person name="Gouveia A."/>
            <person name="Magalhaes A.C."/>
            <person name="Valenca I."/>
            <person name="Marques M."/>
            <person name="Kagan J.C."/>
            <person name="Ribeiro D."/>
        </authorList>
    </citation>
    <scope>FUNCTION (ISOFORM VMIA)</scope>
</reference>
<reference key="15">
    <citation type="journal article" date="2023" name="J. Virol.">
        <title>A Cysteine Residue of Human Cytomegalovirus vMIA Protein Plays a Crucial Role in Viperin Trafficking to Control Viral Infectivity.</title>
        <authorList>
            <person name="Kim J.J."/>
            <person name="Hong S."/>
            <person name="Seo J.Y."/>
        </authorList>
    </citation>
    <scope>FUNCTION (ISOFORM VMIA)</scope>
    <scope>INTERACTION WITH RSAD2 (ISOFORM VMIA)</scope>
    <scope>MUTAGENESIS OF CYS-44</scope>
</reference>
<gene>
    <name type="primary">UL37</name>
</gene>
<organismHost>
    <name type="scientific">Homo sapiens</name>
    <name type="common">Human</name>
    <dbReference type="NCBI Taxonomy" id="9606"/>
</organismHost>
<feature type="signal peptide" evidence="1">
    <location>
        <begin position="1"/>
        <end position="22"/>
    </location>
</feature>
<feature type="chain" id="PRO_0000037455" description="UL37 immediate early glycoprotein">
    <location>
        <begin position="23"/>
        <end position="487"/>
    </location>
</feature>
<feature type="transmembrane region" description="Helical" evidence="1">
    <location>
        <begin position="433"/>
        <end position="459"/>
    </location>
</feature>
<feature type="region of interest" description="Disordered" evidence="2">
    <location>
        <begin position="83"/>
        <end position="121"/>
    </location>
</feature>
<feature type="compositionally biased region" description="Acidic residues" evidence="2">
    <location>
        <begin position="83"/>
        <end position="107"/>
    </location>
</feature>
<feature type="site" description="Cleavage site">
    <location>
        <begin position="193"/>
        <end position="194"/>
    </location>
</feature>
<feature type="glycosylation site" description="N-linked (GlcNAc...) asparagine; by host" evidence="1">
    <location>
        <position position="206"/>
    </location>
</feature>
<feature type="glycosylation site" description="N-linked (GlcNAc...) asparagine; by host" evidence="1">
    <location>
        <position position="210"/>
    </location>
</feature>
<feature type="glycosylation site" description="N-linked (GlcNAc...) asparagine; by host" evidence="1">
    <location>
        <position position="219"/>
    </location>
</feature>
<feature type="glycosylation site" description="N-linked (GlcNAc...) asparagine; by host" evidence="1">
    <location>
        <position position="223"/>
    </location>
</feature>
<feature type="glycosylation site" description="N-linked (GlcNAc...) asparagine; by host" evidence="1">
    <location>
        <position position="242"/>
    </location>
</feature>
<feature type="glycosylation site" description="N-linked (GlcNAc...) asparagine; by host" evidence="1">
    <location>
        <position position="246"/>
    </location>
</feature>
<feature type="glycosylation site" description="N-linked (GlcNAc...) asparagine; by host" evidence="1">
    <location>
        <position position="275"/>
    </location>
</feature>
<feature type="glycosylation site" description="N-linked (GlcNAc...) asparagine; by host" evidence="1">
    <location>
        <position position="281"/>
    </location>
</feature>
<feature type="glycosylation site" description="N-linked (GlcNAc...) asparagine; by host" evidence="1">
    <location>
        <position position="294"/>
    </location>
</feature>
<feature type="glycosylation site" description="N-linked (GlcNAc...) asparagine; by host" evidence="1">
    <location>
        <position position="297"/>
    </location>
</feature>
<feature type="glycosylation site" description="N-linked (GlcNAc...) asparagine; by host" evidence="1">
    <location>
        <position position="306"/>
    </location>
</feature>
<feature type="glycosylation site" description="N-linked (GlcNAc...) asparagine; by host" evidence="1">
    <location>
        <position position="333"/>
    </location>
</feature>
<feature type="glycosylation site" description="N-linked (GlcNAc...) asparagine; by host" evidence="1">
    <location>
        <position position="337"/>
    </location>
</feature>
<feature type="glycosylation site" description="N-linked (GlcNAc...) asparagine; by host" evidence="1">
    <location>
        <position position="343"/>
    </location>
</feature>
<feature type="glycosylation site" description="N-linked (GlcNAc...) asparagine; by host" evidence="1">
    <location>
        <position position="379"/>
    </location>
</feature>
<feature type="glycosylation site" description="N-linked (GlcNAc...) asparagine; by host" evidence="1">
    <location>
        <position position="384"/>
    </location>
</feature>
<feature type="glycosylation site" description="N-linked (GlcNAc...) asparagine; by host" evidence="1">
    <location>
        <position position="391"/>
    </location>
</feature>
<feature type="splice variant" id="VSP_044014" description="In isoform vMIA." evidence="14">
    <original>H</original>
    <variation>Q</variation>
    <location>
        <position position="163"/>
    </location>
</feature>
<feature type="splice variant" id="VSP_044015" description="In isoform vMIA." evidence="14">
    <location>
        <begin position="164"/>
        <end position="487"/>
    </location>
</feature>
<feature type="splice variant" id="VSP_044016" description="In isoform pUL37m." evidence="14">
    <location>
        <begin position="178"/>
        <end position="262"/>
    </location>
</feature>
<feature type="mutagenesis site" description="Complete loss of ability to translocate host RSAD2 into the mitochondria." evidence="10">
    <original>C</original>
    <variation>A</variation>
    <location>
        <position position="44"/>
    </location>
</feature>
<feature type="helix" evidence="15">
    <location>
        <begin position="138"/>
        <end position="145"/>
    </location>
</feature>
<feature type="strand" evidence="15">
    <location>
        <begin position="146"/>
        <end position="148"/>
    </location>
</feature>
<dbReference type="EMBL" id="X17403">
    <property type="protein sequence ID" value="CAA35396.1"/>
    <property type="molecule type" value="Genomic_DNA"/>
</dbReference>
<dbReference type="EMBL" id="BK000394">
    <property type="protein sequence ID" value="DAA00142.1"/>
    <property type="molecule type" value="Genomic_DNA"/>
</dbReference>
<dbReference type="PIR" id="S09801">
    <property type="entry name" value="QQBEU5"/>
</dbReference>
<dbReference type="PDB" id="2LR1">
    <property type="method" value="NMR"/>
    <property type="chains" value="B=130-150"/>
</dbReference>
<dbReference type="PDBsum" id="2LR1"/>
<dbReference type="BMRB" id="P16778"/>
<dbReference type="SMR" id="P16778"/>
<dbReference type="DIP" id="DIP-60096N"/>
<dbReference type="IntAct" id="P16778">
    <property type="interactions" value="1"/>
</dbReference>
<dbReference type="BindingDB" id="P16778"/>
<dbReference type="GlyCosmos" id="P16778">
    <property type="glycosylation" value="17 sites, No reported glycans"/>
</dbReference>
<dbReference type="Proteomes" id="UP000008991">
    <property type="component" value="Segment"/>
</dbReference>
<dbReference type="Proteomes" id="UP000008992">
    <property type="component" value="Segment"/>
</dbReference>
<dbReference type="GO" id="GO:0044167">
    <property type="term" value="C:host cell endoplasmic reticulum membrane"/>
    <property type="evidence" value="ECO:0007669"/>
    <property type="project" value="UniProtKB-SubCell"/>
</dbReference>
<dbReference type="GO" id="GO:0044178">
    <property type="term" value="C:host cell Golgi membrane"/>
    <property type="evidence" value="ECO:0007669"/>
    <property type="project" value="UniProtKB-SubCell"/>
</dbReference>
<dbReference type="GO" id="GO:0044191">
    <property type="term" value="C:host cell mitochondrial membrane"/>
    <property type="evidence" value="ECO:0007669"/>
    <property type="project" value="UniProtKB-SubCell"/>
</dbReference>
<dbReference type="GO" id="GO:0120149">
    <property type="term" value="C:host cell peroxisome"/>
    <property type="evidence" value="ECO:0007669"/>
    <property type="project" value="UniProtKB-SubCell"/>
</dbReference>
<dbReference type="GO" id="GO:0016020">
    <property type="term" value="C:membrane"/>
    <property type="evidence" value="ECO:0007669"/>
    <property type="project" value="UniProtKB-KW"/>
</dbReference>
<dbReference type="GO" id="GO:0052150">
    <property type="term" value="P:symbiont-mediated perturbation of host apoptosis"/>
    <property type="evidence" value="ECO:0007669"/>
    <property type="project" value="UniProtKB-KW"/>
</dbReference>
<dbReference type="InterPro" id="IPR010880">
    <property type="entry name" value="Herpes_UL37_HHV-5-rel"/>
</dbReference>
<dbReference type="Pfam" id="PF07413">
    <property type="entry name" value="Herpes_UL37_2"/>
    <property type="match status" value="1"/>
</dbReference>
<sequence>MSPVYVNLLGSVGLLAFWYFSYRWIQRKRLEDPLPPWLRKKKACALTRRSRHRLRRQHGVIDGENSETERSVDLVAALLAEAGEESVTEDTEREDTEEEREDEEEENEARTPEVNPIDAEGLSGLAREACEALKKALRRHRFLWQRRQRARMLQHNGPQQSHHAAVFCRVHGLRGFQVSVWLLLTLLWSTGHGVSVRCTYHGTDVNRTSNTTSMNCHLNCTRNHTQIYNGPCLGTEARLPLNVTFNQSRRKWHSVMLKFGFQYHLEGWFPLRVLNESREINVTEVHGEVACFRNDTNVTVGQLTLNFTGHSYVLRAIAHTSPFESYVRWEETNVTDNATSSENTTTVMSTLTKYAESDYIFLQDMCPRFLKRTVKLTRNKTKHNVTVTGNNMTTLPVWTPECKGWTYWTTLSVMWRNRRSALLRAKSRALGHWALLSICTVAAGSIALLSLFCILLIGLRRDLLEDFRYICRDEGSSSTKNDVHRIV</sequence>
<evidence type="ECO:0000255" key="1"/>
<evidence type="ECO:0000256" key="2">
    <source>
        <dbReference type="SAM" id="MobiDB-lite"/>
    </source>
</evidence>
<evidence type="ECO:0000269" key="3">
    <source>
    </source>
</evidence>
<evidence type="ECO:0000269" key="4">
    <source>
    </source>
</evidence>
<evidence type="ECO:0000269" key="5">
    <source>
    </source>
</evidence>
<evidence type="ECO:0000269" key="6">
    <source>
    </source>
</evidence>
<evidence type="ECO:0000269" key="7">
    <source>
    </source>
</evidence>
<evidence type="ECO:0000269" key="8">
    <source>
    </source>
</evidence>
<evidence type="ECO:0000269" key="9">
    <source>
    </source>
</evidence>
<evidence type="ECO:0000269" key="10">
    <source>
    </source>
</evidence>
<evidence type="ECO:0000269" key="11">
    <source>
    </source>
</evidence>
<evidence type="ECO:0000269" key="12">
    <source>
    </source>
</evidence>
<evidence type="ECO:0000269" key="13">
    <source>
    </source>
</evidence>
<evidence type="ECO:0000305" key="14"/>
<evidence type="ECO:0007829" key="15">
    <source>
        <dbReference type="PDB" id="2LR1"/>
    </source>
</evidence>